<reference key="1">
    <citation type="journal article" date="2007" name="PLoS Genet.">
        <title>Patterns and implications of gene gain and loss in the evolution of Prochlorococcus.</title>
        <authorList>
            <person name="Kettler G.C."/>
            <person name="Martiny A.C."/>
            <person name="Huang K."/>
            <person name="Zucker J."/>
            <person name="Coleman M.L."/>
            <person name="Rodrigue S."/>
            <person name="Chen F."/>
            <person name="Lapidus A."/>
            <person name="Ferriera S."/>
            <person name="Johnson J."/>
            <person name="Steglich C."/>
            <person name="Church G.M."/>
            <person name="Richardson P."/>
            <person name="Chisholm S.W."/>
        </authorList>
    </citation>
    <scope>NUCLEOTIDE SEQUENCE [LARGE SCALE GENOMIC DNA]</scope>
    <source>
        <strain>NATL1A</strain>
    </source>
</reference>
<comment type="function">
    <text evidence="1">Binds 23S rRNA and is also seen to make contacts with the A and possibly P site tRNAs.</text>
</comment>
<comment type="subunit">
    <text evidence="1">Part of the 50S ribosomal subunit.</text>
</comment>
<comment type="similarity">
    <text evidence="1">Belongs to the universal ribosomal protein uL16 family.</text>
</comment>
<sequence length="161" mass="18184">MLSPKRTKFRKQQRGRMRGVATRGNKIAFGQFALQAQDCGWVTSRQIEASRRAMTRYVKRGGQIWIRIFPDKPVTMRPAETRMGSGKGNPEFWVAVVKPGRILFEMGGDEITETIAKEAMRLAQYKLPVKTKFISLDEDLNKGNYKPAKTPVTADDSESSS</sequence>
<keyword id="KW-0687">Ribonucleoprotein</keyword>
<keyword id="KW-0689">Ribosomal protein</keyword>
<keyword id="KW-0694">RNA-binding</keyword>
<keyword id="KW-0699">rRNA-binding</keyword>
<keyword id="KW-0820">tRNA-binding</keyword>
<protein>
    <recommendedName>
        <fullName evidence="1">Large ribosomal subunit protein uL16</fullName>
    </recommendedName>
    <alternativeName>
        <fullName evidence="3">50S ribosomal protein L16</fullName>
    </alternativeName>
</protein>
<evidence type="ECO:0000255" key="1">
    <source>
        <dbReference type="HAMAP-Rule" id="MF_01342"/>
    </source>
</evidence>
<evidence type="ECO:0000256" key="2">
    <source>
        <dbReference type="SAM" id="MobiDB-lite"/>
    </source>
</evidence>
<evidence type="ECO:0000305" key="3"/>
<gene>
    <name evidence="1" type="primary">rplP</name>
    <name evidence="1" type="synonym">rpl16</name>
    <name type="ordered locus">NATL1_19961</name>
</gene>
<name>RL16_PROM1</name>
<organism>
    <name type="scientific">Prochlorococcus marinus (strain NATL1A)</name>
    <dbReference type="NCBI Taxonomy" id="167555"/>
    <lineage>
        <taxon>Bacteria</taxon>
        <taxon>Bacillati</taxon>
        <taxon>Cyanobacteriota</taxon>
        <taxon>Cyanophyceae</taxon>
        <taxon>Synechococcales</taxon>
        <taxon>Prochlorococcaceae</taxon>
        <taxon>Prochlorococcus</taxon>
    </lineage>
</organism>
<accession>A2C4Z2</accession>
<proteinExistence type="inferred from homology"/>
<feature type="chain" id="PRO_1000054675" description="Large ribosomal subunit protein uL16">
    <location>
        <begin position="1"/>
        <end position="161"/>
    </location>
</feature>
<feature type="region of interest" description="Disordered" evidence="2">
    <location>
        <begin position="140"/>
        <end position="161"/>
    </location>
</feature>
<dbReference type="EMBL" id="CP000553">
    <property type="protein sequence ID" value="ABM76552.1"/>
    <property type="molecule type" value="Genomic_DNA"/>
</dbReference>
<dbReference type="RefSeq" id="WP_011824511.1">
    <property type="nucleotide sequence ID" value="NC_008819.1"/>
</dbReference>
<dbReference type="SMR" id="A2C4Z2"/>
<dbReference type="KEGG" id="pme:NATL1_19961"/>
<dbReference type="eggNOG" id="COG0197">
    <property type="taxonomic scope" value="Bacteria"/>
</dbReference>
<dbReference type="HOGENOM" id="CLU_078858_2_1_3"/>
<dbReference type="Proteomes" id="UP000002592">
    <property type="component" value="Chromosome"/>
</dbReference>
<dbReference type="GO" id="GO:1990904">
    <property type="term" value="C:ribonucleoprotein complex"/>
    <property type="evidence" value="ECO:0007669"/>
    <property type="project" value="UniProtKB-KW"/>
</dbReference>
<dbReference type="GO" id="GO:0005840">
    <property type="term" value="C:ribosome"/>
    <property type="evidence" value="ECO:0007669"/>
    <property type="project" value="UniProtKB-KW"/>
</dbReference>
<dbReference type="GO" id="GO:0019843">
    <property type="term" value="F:rRNA binding"/>
    <property type="evidence" value="ECO:0007669"/>
    <property type="project" value="UniProtKB-UniRule"/>
</dbReference>
<dbReference type="GO" id="GO:0003735">
    <property type="term" value="F:structural constituent of ribosome"/>
    <property type="evidence" value="ECO:0007669"/>
    <property type="project" value="InterPro"/>
</dbReference>
<dbReference type="GO" id="GO:0000049">
    <property type="term" value="F:tRNA binding"/>
    <property type="evidence" value="ECO:0007669"/>
    <property type="project" value="UniProtKB-KW"/>
</dbReference>
<dbReference type="GO" id="GO:0006412">
    <property type="term" value="P:translation"/>
    <property type="evidence" value="ECO:0007669"/>
    <property type="project" value="UniProtKB-UniRule"/>
</dbReference>
<dbReference type="CDD" id="cd01433">
    <property type="entry name" value="Ribosomal_L16_L10e"/>
    <property type="match status" value="1"/>
</dbReference>
<dbReference type="FunFam" id="3.90.1170.10:FF:000001">
    <property type="entry name" value="50S ribosomal protein L16"/>
    <property type="match status" value="1"/>
</dbReference>
<dbReference type="Gene3D" id="3.90.1170.10">
    <property type="entry name" value="Ribosomal protein L10e/L16"/>
    <property type="match status" value="1"/>
</dbReference>
<dbReference type="HAMAP" id="MF_01342">
    <property type="entry name" value="Ribosomal_uL16"/>
    <property type="match status" value="1"/>
</dbReference>
<dbReference type="InterPro" id="IPR047873">
    <property type="entry name" value="Ribosomal_uL16"/>
</dbReference>
<dbReference type="InterPro" id="IPR000114">
    <property type="entry name" value="Ribosomal_uL16_bact-type"/>
</dbReference>
<dbReference type="InterPro" id="IPR020798">
    <property type="entry name" value="Ribosomal_uL16_CS"/>
</dbReference>
<dbReference type="InterPro" id="IPR016180">
    <property type="entry name" value="Ribosomal_uL16_dom"/>
</dbReference>
<dbReference type="InterPro" id="IPR036920">
    <property type="entry name" value="Ribosomal_uL16_sf"/>
</dbReference>
<dbReference type="NCBIfam" id="TIGR01164">
    <property type="entry name" value="rplP_bact"/>
    <property type="match status" value="1"/>
</dbReference>
<dbReference type="PANTHER" id="PTHR12220">
    <property type="entry name" value="50S/60S RIBOSOMAL PROTEIN L16"/>
    <property type="match status" value="1"/>
</dbReference>
<dbReference type="PANTHER" id="PTHR12220:SF13">
    <property type="entry name" value="LARGE RIBOSOMAL SUBUNIT PROTEIN UL16M"/>
    <property type="match status" value="1"/>
</dbReference>
<dbReference type="Pfam" id="PF00252">
    <property type="entry name" value="Ribosomal_L16"/>
    <property type="match status" value="1"/>
</dbReference>
<dbReference type="PRINTS" id="PR00060">
    <property type="entry name" value="RIBOSOMALL16"/>
</dbReference>
<dbReference type="SUPFAM" id="SSF54686">
    <property type="entry name" value="Ribosomal protein L16p/L10e"/>
    <property type="match status" value="1"/>
</dbReference>
<dbReference type="PROSITE" id="PS00586">
    <property type="entry name" value="RIBOSOMAL_L16_1"/>
    <property type="match status" value="1"/>
</dbReference>
<dbReference type="PROSITE" id="PS00701">
    <property type="entry name" value="RIBOSOMAL_L16_2"/>
    <property type="match status" value="1"/>
</dbReference>